<keyword id="KW-0997">Cell inner membrane</keyword>
<keyword id="KW-1003">Cell membrane</keyword>
<keyword id="KW-0406">Ion transport</keyword>
<keyword id="KW-0472">Membrane</keyword>
<keyword id="KW-1185">Reference proteome</keyword>
<keyword id="KW-0812">Transmembrane</keyword>
<keyword id="KW-1133">Transmembrane helix</keyword>
<keyword id="KW-0813">Transport</keyword>
<feature type="chain" id="PRO_0000108097" description="Guanidinium exporter">
    <location>
        <begin position="1"/>
        <end position="105"/>
    </location>
</feature>
<feature type="transmembrane region" description="Helical" evidence="2">
    <location>
        <begin position="1"/>
        <end position="21"/>
    </location>
</feature>
<feature type="topological domain" description="Cytoplasmic" evidence="2">
    <location>
        <begin position="22"/>
        <end position="28"/>
    </location>
</feature>
<feature type="transmembrane region" description="Helical" evidence="2">
    <location>
        <begin position="29"/>
        <end position="49"/>
    </location>
</feature>
<feature type="topological domain" description="Periplasmic" evidence="2">
    <location>
        <begin position="50"/>
        <end position="57"/>
    </location>
</feature>
<feature type="transmembrane region" description="Helical" evidence="2">
    <location>
        <begin position="58"/>
        <end position="78"/>
    </location>
</feature>
<feature type="topological domain" description="Cytoplasmic" evidence="2">
    <location>
        <begin position="79"/>
        <end position="81"/>
    </location>
</feature>
<feature type="transmembrane region" description="Helical" evidence="2">
    <location>
        <begin position="82"/>
        <end position="102"/>
    </location>
</feature>
<feature type="topological domain" description="Periplasmic" evidence="2">
    <location>
        <begin position="103"/>
        <end position="105"/>
    </location>
</feature>
<organism>
    <name type="scientific">Escherichia coli O6:H1 (strain CFT073 / ATCC 700928 / UPEC)</name>
    <dbReference type="NCBI Taxonomy" id="199310"/>
    <lineage>
        <taxon>Bacteria</taxon>
        <taxon>Pseudomonadati</taxon>
        <taxon>Pseudomonadota</taxon>
        <taxon>Gammaproteobacteria</taxon>
        <taxon>Enterobacterales</taxon>
        <taxon>Enterobacteriaceae</taxon>
        <taxon>Escherichia</taxon>
    </lineage>
</organism>
<accession>Q8FAL8</accession>
<name>GDX_ECOL6</name>
<proteinExistence type="inferred from homology"/>
<reference key="1">
    <citation type="journal article" date="2002" name="Proc. Natl. Acad. Sci. U.S.A.">
        <title>Extensive mosaic structure revealed by the complete genome sequence of uropathogenic Escherichia coli.</title>
        <authorList>
            <person name="Welch R.A."/>
            <person name="Burland V."/>
            <person name="Plunkett G. III"/>
            <person name="Redford P."/>
            <person name="Roesch P."/>
            <person name="Rasko D."/>
            <person name="Buckles E.L."/>
            <person name="Liou S.-R."/>
            <person name="Boutin A."/>
            <person name="Hackett J."/>
            <person name="Stroud D."/>
            <person name="Mayhew G.F."/>
            <person name="Rose D.J."/>
            <person name="Zhou S."/>
            <person name="Schwartz D.C."/>
            <person name="Perna N.T."/>
            <person name="Mobley H.L.T."/>
            <person name="Donnenberg M.S."/>
            <person name="Blattner F.R."/>
        </authorList>
    </citation>
    <scope>NUCLEOTIDE SEQUENCE [LARGE SCALE GENOMIC DNA]</scope>
    <source>
        <strain>CFT073 / ATCC 700928 / UPEC</strain>
    </source>
</reference>
<sequence>MSWIILVIAGLLEVVWAVGLKYTHGFSRLTPSVITVTAMIVSLALLAWAMKSLPVGTAYAVWTGIGAVGAAITGIVLLGESANPMRLASLALIVLGIIGLKLSTH</sequence>
<evidence type="ECO:0000250" key="1">
    <source>
        <dbReference type="UniProtKB" id="P69937"/>
    </source>
</evidence>
<evidence type="ECO:0000255" key="2"/>
<evidence type="ECO:0000305" key="3"/>
<dbReference type="EMBL" id="AE014075">
    <property type="protein sequence ID" value="AAN83658.1"/>
    <property type="status" value="ALT_INIT"/>
    <property type="molecule type" value="Genomic_DNA"/>
</dbReference>
<dbReference type="RefSeq" id="WP_000118477.1">
    <property type="nucleotide sequence ID" value="NZ_CP051263.1"/>
</dbReference>
<dbReference type="SMR" id="Q8FAL8"/>
<dbReference type="STRING" id="199310.c5236"/>
<dbReference type="KEGG" id="ecc:c5236"/>
<dbReference type="eggNOG" id="COG2076">
    <property type="taxonomic scope" value="Bacteria"/>
</dbReference>
<dbReference type="HOGENOM" id="CLU_133067_1_1_6"/>
<dbReference type="Proteomes" id="UP000001410">
    <property type="component" value="Chromosome"/>
</dbReference>
<dbReference type="GO" id="GO:0005886">
    <property type="term" value="C:plasma membrane"/>
    <property type="evidence" value="ECO:0007669"/>
    <property type="project" value="UniProtKB-SubCell"/>
</dbReference>
<dbReference type="GO" id="GO:0022857">
    <property type="term" value="F:transmembrane transporter activity"/>
    <property type="evidence" value="ECO:0007669"/>
    <property type="project" value="InterPro"/>
</dbReference>
<dbReference type="GO" id="GO:0006811">
    <property type="term" value="P:monoatomic ion transport"/>
    <property type="evidence" value="ECO:0007669"/>
    <property type="project" value="UniProtKB-KW"/>
</dbReference>
<dbReference type="FunFam" id="1.10.3730.20:FF:000001">
    <property type="entry name" value="Quaternary ammonium compound resistance transporter SugE"/>
    <property type="match status" value="1"/>
</dbReference>
<dbReference type="Gene3D" id="1.10.3730.20">
    <property type="match status" value="1"/>
</dbReference>
<dbReference type="InterPro" id="IPR000390">
    <property type="entry name" value="Small_drug/metabolite_transptr"/>
</dbReference>
<dbReference type="InterPro" id="IPR045324">
    <property type="entry name" value="Small_multidrug_res"/>
</dbReference>
<dbReference type="NCBIfam" id="NF008512">
    <property type="entry name" value="PRK11431.1"/>
    <property type="match status" value="1"/>
</dbReference>
<dbReference type="PANTHER" id="PTHR30561:SF0">
    <property type="entry name" value="GUANIDINIUM EXPORTER"/>
    <property type="match status" value="1"/>
</dbReference>
<dbReference type="PANTHER" id="PTHR30561">
    <property type="entry name" value="SMR FAMILY PROTON-DEPENDENT DRUG EFFLUX TRANSPORTER SUGE"/>
    <property type="match status" value="1"/>
</dbReference>
<dbReference type="Pfam" id="PF00893">
    <property type="entry name" value="Multi_Drug_Res"/>
    <property type="match status" value="1"/>
</dbReference>
<dbReference type="SUPFAM" id="SSF103481">
    <property type="entry name" value="Multidrug resistance efflux transporter EmrE"/>
    <property type="match status" value="1"/>
</dbReference>
<protein>
    <recommendedName>
        <fullName evidence="1">Guanidinium exporter</fullName>
    </recommendedName>
</protein>
<gene>
    <name evidence="1" type="primary">gdx</name>
    <name type="synonym">sugE</name>
    <name type="ordered locus">c5236</name>
</gene>
<comment type="function">
    <text evidence="1">Guanidinium ion exporter. Couples guanidinium export to the proton motive force, exchanging one guanidinium ion for two protons.</text>
</comment>
<comment type="subcellular location">
    <subcellularLocation>
        <location evidence="1">Cell inner membrane</location>
        <topology evidence="1">Multi-pass membrane protein</topology>
    </subcellularLocation>
</comment>
<comment type="similarity">
    <text evidence="3">Belongs to the drug/metabolite transporter (DMT) superfamily. Small multidrug resistance (SMR) (TC 2.A.7.1) family. Gdx/SugE subfamily.</text>
</comment>
<comment type="sequence caution" evidence="3">
    <conflict type="erroneous initiation">
        <sequence resource="EMBL-CDS" id="AAN83658"/>
    </conflict>
</comment>